<name>P8_RDVF</name>
<evidence type="ECO:0000250" key="1"/>
<evidence type="ECO:0000269" key="2">
    <source>
    </source>
</evidence>
<evidence type="ECO:0000269" key="3">
    <source>
    </source>
</evidence>
<evidence type="ECO:0000305" key="4"/>
<comment type="function">
    <text>Capsid protein which self-assembles to form the outer icosahedral capsid with a T=13 symmetry, about 70 nm in diameter and consisting of 780 molecules capsid proteins.</text>
</comment>
<comment type="subunit">
    <text evidence="1 3">Homotrimer (By similarity). Homomultimer (By similarity). Interacts with host peroxisomal glycolate oxidase (GOX). This interaction mediates its relocation to virus factories peripheral to host peroxisomes.</text>
</comment>
<comment type="subcellular location">
    <molecule>Outer capsid protein P8</molecule>
    <subcellularLocation>
        <location evidence="4">Virion</location>
    </subcellularLocation>
    <subcellularLocation>
        <location evidence="2 3">Host cytoplasm</location>
    </subcellularLocation>
    <text>Found in the peripheral regions of spherical cytoplasmic structures, called virus factories, that appear early after infection and are the site of viral replication and packaging.</text>
</comment>
<comment type="similarity">
    <text evidence="4">Belongs to the phytoreovirus outer capsid protein P8 family.</text>
</comment>
<sequence>MSRQMWLDTSALLEAISEYVVRCNGDTFSGLTTGDFNALSNMFTQLSVSSAGYVSDPRVPLQTMSNMFVSFITSTDRCGYMLGKTWFNSDTKPTVSDDFITAYIKPRLQVPMSDTVRQLNNLSLQPSAKPKLYERQNAIMKGLDIPYSEPIEPCKLFRSVAGQTGNIPLMGILLTPPVAQQQPFFVAERRRILFGIRSNAAIPAGAYQFVVPAWASVLSVTGAYVYFTNSFFGTTIAGVTATATAADAATTFTVPTDANNLPVQTDSRLSFSLGGGNINLELGVAKTGFCVAIEGEFTILANRSQAYYTLNSITQTPTSIDDFDVSDFLTTFLSQLRACGQYEIFSDAMDQLTNNLITNYMDPPAIPAGLAFTSPWFRFSERARTILALQNVDLNIRKLMVRHLWVITSLIAVFGRYYRPN</sequence>
<organismHost>
    <name type="scientific">Alopecurus aequalis</name>
    <dbReference type="NCBI Taxonomy" id="114194"/>
</organismHost>
<organismHost>
    <name type="scientific">Echinochloa crus-galli</name>
    <name type="common">Barnyard grass</name>
    <name type="synonym">Panicum crus-galli</name>
    <dbReference type="NCBI Taxonomy" id="90397"/>
</organismHost>
<organismHost>
    <name type="scientific">Nephotettix cincticeps</name>
    <name type="common">Green rice leafhopper</name>
    <name type="synonym">Selenocephalus cincticeps</name>
    <dbReference type="NCBI Taxonomy" id="94400"/>
</organismHost>
<organismHost>
    <name type="scientific">Oryza sativa</name>
    <name type="common">Rice</name>
    <dbReference type="NCBI Taxonomy" id="4530"/>
</organismHost>
<organismHost>
    <name type="scientific">Paspalum</name>
    <dbReference type="NCBI Taxonomy" id="147271"/>
</organismHost>
<proteinExistence type="evidence at protein level"/>
<organism>
    <name type="scientific">Rice dwarf virus (isolate Fujian)</name>
    <name type="common">RDV</name>
    <dbReference type="NCBI Taxonomy" id="142804"/>
    <lineage>
        <taxon>Viruses</taxon>
        <taxon>Riboviria</taxon>
        <taxon>Orthornavirae</taxon>
        <taxon>Duplornaviricota</taxon>
        <taxon>Resentoviricetes</taxon>
        <taxon>Reovirales</taxon>
        <taxon>Sedoreoviridae</taxon>
        <taxon>Phytoreovirus</taxon>
        <taxon>Rice dwarf virus</taxon>
    </lineage>
</organism>
<protein>
    <recommendedName>
        <fullName>Outer capsid protein P8</fullName>
    </recommendedName>
    <alternativeName>
        <fullName>Structural protein P8</fullName>
    </alternativeName>
    <component>
        <recommendedName>
            <fullName>Outer capsid protein P8'</fullName>
        </recommendedName>
    </component>
    <component>
        <recommendedName>
            <fullName>Small peptide 1</fullName>
            <shortName>Sp1</shortName>
        </recommendedName>
    </component>
</protein>
<dbReference type="EMBL" id="U36565">
    <property type="protein sequence ID" value="AAA88764.1"/>
    <property type="molecule type" value="mRNA"/>
</dbReference>
<dbReference type="RefSeq" id="NP_620534.1">
    <property type="nucleotide sequence ID" value="NC_003764.1"/>
</dbReference>
<dbReference type="SMR" id="Q85439"/>
<dbReference type="GeneID" id="956499"/>
<dbReference type="KEGG" id="vg:956499"/>
<dbReference type="Proteomes" id="UP000002239">
    <property type="component" value="Genome"/>
</dbReference>
<dbReference type="GO" id="GO:0030430">
    <property type="term" value="C:host cell cytoplasm"/>
    <property type="evidence" value="ECO:0000314"/>
    <property type="project" value="UniProtKB"/>
</dbReference>
<dbReference type="GO" id="GO:0044161">
    <property type="term" value="C:host cell cytoplasmic vesicle"/>
    <property type="evidence" value="ECO:0000314"/>
    <property type="project" value="UniProtKB"/>
</dbReference>
<dbReference type="GO" id="GO:0019031">
    <property type="term" value="C:viral envelope"/>
    <property type="evidence" value="ECO:0007669"/>
    <property type="project" value="InterPro"/>
</dbReference>
<dbReference type="GO" id="GO:0039624">
    <property type="term" value="C:viral outer capsid"/>
    <property type="evidence" value="ECO:0007669"/>
    <property type="project" value="UniProtKB-KW"/>
</dbReference>
<dbReference type="GO" id="GO:0046789">
    <property type="term" value="F:host cell surface receptor binding"/>
    <property type="evidence" value="ECO:0007669"/>
    <property type="project" value="InterPro"/>
</dbReference>
<dbReference type="GO" id="GO:0005198">
    <property type="term" value="F:structural molecule activity"/>
    <property type="evidence" value="ECO:0007669"/>
    <property type="project" value="InterPro"/>
</dbReference>
<dbReference type="GO" id="GO:0019064">
    <property type="term" value="P:fusion of virus membrane with host plasma membrane"/>
    <property type="evidence" value="ECO:0007669"/>
    <property type="project" value="InterPro"/>
</dbReference>
<dbReference type="GO" id="GO:0046718">
    <property type="term" value="P:symbiont entry into host cell"/>
    <property type="evidence" value="ECO:0000353"/>
    <property type="project" value="UniProtKB"/>
</dbReference>
<dbReference type="Gene3D" id="2.60.120.170">
    <property type="match status" value="1"/>
</dbReference>
<dbReference type="InterPro" id="IPR008980">
    <property type="entry name" value="Capsid_hemagglutn"/>
</dbReference>
<dbReference type="InterPro" id="IPR009807">
    <property type="entry name" value="Phytoreo_P8"/>
</dbReference>
<dbReference type="InterPro" id="IPR008935">
    <property type="entry name" value="Virus_capsid_a-hlx_vir"/>
</dbReference>
<dbReference type="Pfam" id="PF07124">
    <property type="entry name" value="Phytoreo_P8"/>
    <property type="match status" value="1"/>
</dbReference>
<dbReference type="SUPFAM" id="SSF48345">
    <property type="entry name" value="A virus capsid protein alpha-helical domain"/>
    <property type="match status" value="1"/>
</dbReference>
<dbReference type="SUPFAM" id="SSF49818">
    <property type="entry name" value="Viral protein domain"/>
    <property type="match status" value="1"/>
</dbReference>
<feature type="chain" id="PRO_0000040671" description="Outer capsid protein P8">
    <location>
        <begin position="1"/>
        <end position="421"/>
    </location>
</feature>
<feature type="chain" id="PRO_0000040672" description="Outer capsid protein P8'">
    <location>
        <begin position="1"/>
        <end position="362"/>
    </location>
</feature>
<feature type="chain" id="PRO_0000040673" description="Small peptide 1">
    <location>
        <begin position="363"/>
        <end position="421"/>
    </location>
</feature>
<keyword id="KW-0167">Capsid protein</keyword>
<keyword id="KW-0903">Direct protein sequencing</keyword>
<keyword id="KW-1035">Host cytoplasm</keyword>
<keyword id="KW-0945">Host-virus interaction</keyword>
<keyword id="KW-1152">Outer capsid protein</keyword>
<keyword id="KW-1185">Reference proteome</keyword>
<keyword id="KW-0946">Virion</keyword>
<reference key="1">
    <citation type="journal article" date="1995" name="Ping Tu Hsueh Pao">
        <title>Molecular cloning and sequencing of the eighth largest segment of rice dwarf virus and its expression in E. coli.</title>
        <authorList>
            <person name="Li W."/>
            <person name="Li Y."/>
            <person name="Zhang X."/>
            <person name="Chu R."/>
            <person name="Chen Z."/>
        </authorList>
    </citation>
    <scope>NUCLEOTIDE SEQUENCE [MRNA]</scope>
</reference>
<reference key="2">
    <citation type="journal article" date="1990" name="Acta Bot. Sin.">
        <title>Partial cDNA cloning and nucleotide sequence of rice dwarf virus genome.</title>
        <authorList>
            <person name="Gao Q."/>
            <person name="Qu Y."/>
            <person name="Liu W."/>
            <person name="Pan N.-S."/>
            <person name="Chen Z."/>
        </authorList>
    </citation>
    <scope>PARTIAL NUCLEOTIDE SEQUENCE [MRNA]</scope>
</reference>
<reference key="3">
    <citation type="journal article" date="1998" name="Arch. Virol.">
        <title>The 42K protein of rice dwarf virus is a post-translational cleavage product of the 46K outer capsid protein.</title>
        <authorList>
            <person name="Mao Z.J."/>
            <person name="Li Y."/>
            <person name="Xu H."/>
            <person name="Zheng H.H."/>
            <person name="Schiemann J."/>
            <person name="Casper R."/>
            <person name="Chen Z.L."/>
        </authorList>
    </citation>
    <scope>PROTEOLYTIC PROCESSING</scope>
    <scope>PARTIAL PROTEIN SEQUENCE</scope>
</reference>
<reference key="4">
    <citation type="journal article" date="2006" name="J. Gen. Virol.">
        <title>Pns12 protein of Rice dwarf virus is essential for formation of viroplasms and nucleation of viral-assembly complexes.</title>
        <authorList>
            <person name="Wei T."/>
            <person name="Shimizu T."/>
            <person name="Hagiwara K."/>
            <person name="Kikuchi A."/>
            <person name="Moriyasu Y."/>
            <person name="Suzuki N."/>
            <person name="Chen H."/>
            <person name="Omura T."/>
        </authorList>
    </citation>
    <scope>SUBCELLULAR LOCATION</scope>
</reference>
<reference key="5">
    <citation type="journal article" date="2007" name="FEBS Lett.">
        <title>Interaction of rice dwarf virus outer capsid P8 protein with rice glycolate oxidase mediates relocalization of P8.</title>
        <authorList>
            <person name="Zhou F."/>
            <person name="Wu G."/>
            <person name="Deng W."/>
            <person name="Pu Y."/>
            <person name="Wei C."/>
            <person name="Li Y."/>
        </authorList>
    </citation>
    <scope>INTERACTION WITH ORYZA SATIVA GLO1/GOX</scope>
    <scope>SUBCELLULAR LOCATION</scope>
    <source>
        <strain>cv. Xiushui 11</strain>
    </source>
</reference>
<accession>Q85439</accession>